<comment type="PTM">
    <text evidence="3">Phosphorylated. Phosphorylation increases protein degradation.</text>
</comment>
<comment type="similarity">
    <text evidence="4">Belongs to the BZR/LAT61 family.</text>
</comment>
<comment type="sequence caution" evidence="4">
    <conflict type="frameshift">
        <sequence resource="EMBL-CDS" id="AEE86700"/>
    </conflict>
</comment>
<comment type="sequence caution" evidence="4">
    <conflict type="frameshift">
        <sequence resource="EMBL-CDS" id="CAB16821"/>
    </conflict>
</comment>
<comment type="sequence caution" evidence="4">
    <conflict type="frameshift">
        <sequence resource="EMBL-CDS" id="CAB80344"/>
    </conflict>
</comment>
<gene>
    <name type="primary">BEH2</name>
    <name type="ordered locus">At4g36780</name>
    <name type="ORF">AP22.34</name>
    <name type="ORF">C7A10_580</name>
</gene>
<dbReference type="EMBL" id="Z99708">
    <property type="protein sequence ID" value="CAB16821.1"/>
    <property type="status" value="ALT_FRAME"/>
    <property type="molecule type" value="Genomic_DNA"/>
</dbReference>
<dbReference type="EMBL" id="AL161590">
    <property type="protein sequence ID" value="CAB80344.1"/>
    <property type="status" value="ALT_FRAME"/>
    <property type="molecule type" value="Genomic_DNA"/>
</dbReference>
<dbReference type="EMBL" id="CP002687">
    <property type="protein sequence ID" value="AEE86700.1"/>
    <property type="status" value="ALT_FRAME"/>
    <property type="molecule type" value="Genomic_DNA"/>
</dbReference>
<dbReference type="EMBL" id="AY050394">
    <property type="protein sequence ID" value="AAK91411.1"/>
    <property type="molecule type" value="mRNA"/>
</dbReference>
<dbReference type="EMBL" id="AY097357">
    <property type="protein sequence ID" value="AAM19873.1"/>
    <property type="molecule type" value="mRNA"/>
</dbReference>
<dbReference type="RefSeq" id="NP_195396.4">
    <property type="nucleotide sequence ID" value="NM_119842.7"/>
</dbReference>
<dbReference type="SMR" id="Q94A43"/>
<dbReference type="BioGRID" id="15112">
    <property type="interactions" value="4"/>
</dbReference>
<dbReference type="FunCoup" id="Q94A43">
    <property type="interactions" value="289"/>
</dbReference>
<dbReference type="STRING" id="3702.Q94A43"/>
<dbReference type="GlyGen" id="Q94A43">
    <property type="glycosylation" value="1 site"/>
</dbReference>
<dbReference type="PaxDb" id="3702-AT4G36780.1"/>
<dbReference type="ProteomicsDB" id="240460"/>
<dbReference type="GeneID" id="829831"/>
<dbReference type="KEGG" id="ath:AT4G36780"/>
<dbReference type="Araport" id="AT4G36780"/>
<dbReference type="TAIR" id="AT4G36780"/>
<dbReference type="eggNOG" id="ENOG502QS1Z">
    <property type="taxonomic scope" value="Eukaryota"/>
</dbReference>
<dbReference type="InParanoid" id="Q94A43"/>
<dbReference type="OrthoDB" id="775852at2759"/>
<dbReference type="PhylomeDB" id="Q94A43"/>
<dbReference type="PRO" id="PR:Q94A43"/>
<dbReference type="Proteomes" id="UP000006548">
    <property type="component" value="Chromosome 4"/>
</dbReference>
<dbReference type="ExpressionAtlas" id="Q94A43">
    <property type="expression patterns" value="baseline and differential"/>
</dbReference>
<dbReference type="GO" id="GO:0003677">
    <property type="term" value="F:DNA binding"/>
    <property type="evidence" value="ECO:0007669"/>
    <property type="project" value="UniProtKB-KW"/>
</dbReference>
<dbReference type="GO" id="GO:0003700">
    <property type="term" value="F:DNA-binding transcription factor activity"/>
    <property type="evidence" value="ECO:0007669"/>
    <property type="project" value="InterPro"/>
</dbReference>
<dbReference type="GO" id="GO:0009742">
    <property type="term" value="P:brassinosteroid mediated signaling pathway"/>
    <property type="evidence" value="ECO:0007669"/>
    <property type="project" value="InterPro"/>
</dbReference>
<dbReference type="GO" id="GO:0006351">
    <property type="term" value="P:DNA-templated transcription"/>
    <property type="evidence" value="ECO:0007669"/>
    <property type="project" value="InterPro"/>
</dbReference>
<dbReference type="InterPro" id="IPR008540">
    <property type="entry name" value="BES1_N"/>
</dbReference>
<dbReference type="InterPro" id="IPR033264">
    <property type="entry name" value="BZR"/>
</dbReference>
<dbReference type="PANTHER" id="PTHR31506">
    <property type="entry name" value="BES1/BZR1 HOMOLOG PROTEIN 3-RELATED"/>
    <property type="match status" value="1"/>
</dbReference>
<dbReference type="PANTHER" id="PTHR31506:SF15">
    <property type="entry name" value="BES1_BZR1 HOMOLOG PROTEIN 2"/>
    <property type="match status" value="1"/>
</dbReference>
<dbReference type="Pfam" id="PF05687">
    <property type="entry name" value="BES1_N"/>
    <property type="match status" value="1"/>
</dbReference>
<evidence type="ECO:0000250" key="1"/>
<evidence type="ECO:0000256" key="2">
    <source>
        <dbReference type="SAM" id="MobiDB-lite"/>
    </source>
</evidence>
<evidence type="ECO:0000269" key="3">
    <source>
    </source>
</evidence>
<evidence type="ECO:0000305" key="4"/>
<sequence>MAAGGGGGGGGSSSGRTPTWKERENNKKRERRRRAITAKIYSGLRAQGNYKLPKHCDNNEVLKALCLEAGWIVEDDGTTYRKGFKPPASDISGTPTNFSTNSSIQPSPQSSAFPSPAPSYHGSPVSSSFPSPSRYDGNPSSYLLLPFLHNIASSIPANLPPLRISNSAPVTPPLSSPTSRGSKRKLTSEQLPNGGSLHVLRHPLFAISAPSSPTRRAGHQTPPTIPECDESEEDSIEDSGRWINFQSTAPTSPTFNLVQQTSMAIDMKRSDWGMSGMNGRGAEFEFENGTVKPWEGEMIHEVGVEDLELTLGGTKARC</sequence>
<feature type="chain" id="PRO_0000113274" description="BES1/BZR1 homolog protein 2">
    <location>
        <begin position="1"/>
        <end position="318"/>
    </location>
</feature>
<feature type="region of interest" description="Disordered" evidence="2">
    <location>
        <begin position="1"/>
        <end position="34"/>
    </location>
</feature>
<feature type="region of interest" description="Required for DNA-binding" evidence="1">
    <location>
        <begin position="16"/>
        <end position="97"/>
    </location>
</feature>
<feature type="region of interest" description="Disordered" evidence="2">
    <location>
        <begin position="84"/>
        <end position="133"/>
    </location>
</feature>
<feature type="region of interest" description="Disordered" evidence="2">
    <location>
        <begin position="166"/>
        <end position="195"/>
    </location>
</feature>
<feature type="region of interest" description="Disordered" evidence="2">
    <location>
        <begin position="209"/>
        <end position="231"/>
    </location>
</feature>
<feature type="compositionally biased region" description="Gly residues" evidence="2">
    <location>
        <begin position="1"/>
        <end position="13"/>
    </location>
</feature>
<feature type="compositionally biased region" description="Polar residues" evidence="2">
    <location>
        <begin position="91"/>
        <end position="101"/>
    </location>
</feature>
<feature type="compositionally biased region" description="Low complexity" evidence="2">
    <location>
        <begin position="102"/>
        <end position="133"/>
    </location>
</feature>
<feature type="mutagenesis site" description="In BEH2m; increased stability of the protein and constitutive brassinosteroids response.">
    <original>P</original>
    <variation>L</variation>
    <location>
        <position position="222"/>
    </location>
</feature>
<proteinExistence type="evidence at protein level"/>
<keyword id="KW-0238">DNA-binding</keyword>
<keyword id="KW-0597">Phosphoprotein</keyword>
<keyword id="KW-1185">Reference proteome</keyword>
<keyword id="KW-0804">Transcription</keyword>
<keyword id="KW-0805">Transcription regulation</keyword>
<organism>
    <name type="scientific">Arabidopsis thaliana</name>
    <name type="common">Mouse-ear cress</name>
    <dbReference type="NCBI Taxonomy" id="3702"/>
    <lineage>
        <taxon>Eukaryota</taxon>
        <taxon>Viridiplantae</taxon>
        <taxon>Streptophyta</taxon>
        <taxon>Embryophyta</taxon>
        <taxon>Tracheophyta</taxon>
        <taxon>Spermatophyta</taxon>
        <taxon>Magnoliopsida</taxon>
        <taxon>eudicotyledons</taxon>
        <taxon>Gunneridae</taxon>
        <taxon>Pentapetalae</taxon>
        <taxon>rosids</taxon>
        <taxon>malvids</taxon>
        <taxon>Brassicales</taxon>
        <taxon>Brassicaceae</taxon>
        <taxon>Camelineae</taxon>
        <taxon>Arabidopsis</taxon>
    </lineage>
</organism>
<reference key="1">
    <citation type="journal article" date="1998" name="Nature">
        <title>Analysis of 1.9 Mb of contiguous sequence from chromosome 4 of Arabidopsis thaliana.</title>
        <authorList>
            <person name="Bevan M."/>
            <person name="Bancroft I."/>
            <person name="Bent E."/>
            <person name="Love K."/>
            <person name="Goodman H.M."/>
            <person name="Dean C."/>
            <person name="Bergkamp R."/>
            <person name="Dirkse W."/>
            <person name="van Staveren M."/>
            <person name="Stiekema W."/>
            <person name="Drost L."/>
            <person name="Ridley P."/>
            <person name="Hudson S.-A."/>
            <person name="Patel K."/>
            <person name="Murphy G."/>
            <person name="Piffanelli P."/>
            <person name="Wedler H."/>
            <person name="Wedler E."/>
            <person name="Wambutt R."/>
            <person name="Weitzenegger T."/>
            <person name="Pohl T."/>
            <person name="Terryn N."/>
            <person name="Gielen J."/>
            <person name="Villarroel R."/>
            <person name="De Clercq R."/>
            <person name="van Montagu M."/>
            <person name="Lecharny A."/>
            <person name="Aubourg S."/>
            <person name="Gy I."/>
            <person name="Kreis M."/>
            <person name="Lao N."/>
            <person name="Kavanagh T."/>
            <person name="Hempel S."/>
            <person name="Kotter P."/>
            <person name="Entian K.-D."/>
            <person name="Rieger M."/>
            <person name="Schaefer M."/>
            <person name="Funk B."/>
            <person name="Mueller-Auer S."/>
            <person name="Silvey M."/>
            <person name="James R."/>
            <person name="Monfort A."/>
            <person name="Pons A."/>
            <person name="Puigdomenech P."/>
            <person name="Douka A."/>
            <person name="Voukelatou E."/>
            <person name="Milioni D."/>
            <person name="Hatzopoulos P."/>
            <person name="Piravandi E."/>
            <person name="Obermaier B."/>
            <person name="Hilbert H."/>
            <person name="Duesterhoeft A."/>
            <person name="Moores T."/>
            <person name="Jones J.D.G."/>
            <person name="Eneva T."/>
            <person name="Palme K."/>
            <person name="Benes V."/>
            <person name="Rechmann S."/>
            <person name="Ansorge W."/>
            <person name="Cooke R."/>
            <person name="Berger C."/>
            <person name="Delseny M."/>
            <person name="Voet M."/>
            <person name="Volckaert G."/>
            <person name="Mewes H.-W."/>
            <person name="Klosterman S."/>
            <person name="Schueller C."/>
            <person name="Chalwatzis N."/>
        </authorList>
    </citation>
    <scope>NUCLEOTIDE SEQUENCE [LARGE SCALE GENOMIC DNA]</scope>
    <source>
        <strain>cv. Columbia</strain>
    </source>
</reference>
<reference key="2">
    <citation type="journal article" date="1999" name="Nature">
        <title>Sequence and analysis of chromosome 4 of the plant Arabidopsis thaliana.</title>
        <authorList>
            <person name="Mayer K.F.X."/>
            <person name="Schueller C."/>
            <person name="Wambutt R."/>
            <person name="Murphy G."/>
            <person name="Volckaert G."/>
            <person name="Pohl T."/>
            <person name="Duesterhoeft A."/>
            <person name="Stiekema W."/>
            <person name="Entian K.-D."/>
            <person name="Terryn N."/>
            <person name="Harris B."/>
            <person name="Ansorge W."/>
            <person name="Brandt P."/>
            <person name="Grivell L.A."/>
            <person name="Rieger M."/>
            <person name="Weichselgartner M."/>
            <person name="de Simone V."/>
            <person name="Obermaier B."/>
            <person name="Mache R."/>
            <person name="Mueller M."/>
            <person name="Kreis M."/>
            <person name="Delseny M."/>
            <person name="Puigdomenech P."/>
            <person name="Watson M."/>
            <person name="Schmidtheini T."/>
            <person name="Reichert B."/>
            <person name="Portetelle D."/>
            <person name="Perez-Alonso M."/>
            <person name="Boutry M."/>
            <person name="Bancroft I."/>
            <person name="Vos P."/>
            <person name="Hoheisel J."/>
            <person name="Zimmermann W."/>
            <person name="Wedler H."/>
            <person name="Ridley P."/>
            <person name="Langham S.-A."/>
            <person name="McCullagh B."/>
            <person name="Bilham L."/>
            <person name="Robben J."/>
            <person name="van der Schueren J."/>
            <person name="Grymonprez B."/>
            <person name="Chuang Y.-J."/>
            <person name="Vandenbussche F."/>
            <person name="Braeken M."/>
            <person name="Weltjens I."/>
            <person name="Voet M."/>
            <person name="Bastiaens I."/>
            <person name="Aert R."/>
            <person name="Defoor E."/>
            <person name="Weitzenegger T."/>
            <person name="Bothe G."/>
            <person name="Ramsperger U."/>
            <person name="Hilbert H."/>
            <person name="Braun M."/>
            <person name="Holzer E."/>
            <person name="Brandt A."/>
            <person name="Peters S."/>
            <person name="van Staveren M."/>
            <person name="Dirkse W."/>
            <person name="Mooijman P."/>
            <person name="Klein Lankhorst R."/>
            <person name="Rose M."/>
            <person name="Hauf J."/>
            <person name="Koetter P."/>
            <person name="Berneiser S."/>
            <person name="Hempel S."/>
            <person name="Feldpausch M."/>
            <person name="Lamberth S."/>
            <person name="Van den Daele H."/>
            <person name="De Keyser A."/>
            <person name="Buysshaert C."/>
            <person name="Gielen J."/>
            <person name="Villarroel R."/>
            <person name="De Clercq R."/>
            <person name="van Montagu M."/>
            <person name="Rogers J."/>
            <person name="Cronin A."/>
            <person name="Quail M.A."/>
            <person name="Bray-Allen S."/>
            <person name="Clark L."/>
            <person name="Doggett J."/>
            <person name="Hall S."/>
            <person name="Kay M."/>
            <person name="Lennard N."/>
            <person name="McLay K."/>
            <person name="Mayes R."/>
            <person name="Pettett A."/>
            <person name="Rajandream M.A."/>
            <person name="Lyne M."/>
            <person name="Benes V."/>
            <person name="Rechmann S."/>
            <person name="Borkova D."/>
            <person name="Bloecker H."/>
            <person name="Scharfe M."/>
            <person name="Grimm M."/>
            <person name="Loehnert T.-H."/>
            <person name="Dose S."/>
            <person name="de Haan M."/>
            <person name="Maarse A.C."/>
            <person name="Schaefer M."/>
            <person name="Mueller-Auer S."/>
            <person name="Gabel C."/>
            <person name="Fuchs M."/>
            <person name="Fartmann B."/>
            <person name="Granderath K."/>
            <person name="Dauner D."/>
            <person name="Herzl A."/>
            <person name="Neumann S."/>
            <person name="Argiriou A."/>
            <person name="Vitale D."/>
            <person name="Liguori R."/>
            <person name="Piravandi E."/>
            <person name="Massenet O."/>
            <person name="Quigley F."/>
            <person name="Clabauld G."/>
            <person name="Muendlein A."/>
            <person name="Felber R."/>
            <person name="Schnabl S."/>
            <person name="Hiller R."/>
            <person name="Schmidt W."/>
            <person name="Lecharny A."/>
            <person name="Aubourg S."/>
            <person name="Chefdor F."/>
            <person name="Cooke R."/>
            <person name="Berger C."/>
            <person name="Monfort A."/>
            <person name="Casacuberta E."/>
            <person name="Gibbons T."/>
            <person name="Weber N."/>
            <person name="Vandenbol M."/>
            <person name="Bargues M."/>
            <person name="Terol J."/>
            <person name="Torres A."/>
            <person name="Perez-Perez A."/>
            <person name="Purnelle B."/>
            <person name="Bent E."/>
            <person name="Johnson S."/>
            <person name="Tacon D."/>
            <person name="Jesse T."/>
            <person name="Heijnen L."/>
            <person name="Schwarz S."/>
            <person name="Scholler P."/>
            <person name="Heber S."/>
            <person name="Francs P."/>
            <person name="Bielke C."/>
            <person name="Frishman D."/>
            <person name="Haase D."/>
            <person name="Lemcke K."/>
            <person name="Mewes H.-W."/>
            <person name="Stocker S."/>
            <person name="Zaccaria P."/>
            <person name="Bevan M."/>
            <person name="Wilson R.K."/>
            <person name="de la Bastide M."/>
            <person name="Habermann K."/>
            <person name="Parnell L."/>
            <person name="Dedhia N."/>
            <person name="Gnoj L."/>
            <person name="Schutz K."/>
            <person name="Huang E."/>
            <person name="Spiegel L."/>
            <person name="Sekhon M."/>
            <person name="Murray J."/>
            <person name="Sheet P."/>
            <person name="Cordes M."/>
            <person name="Abu-Threideh J."/>
            <person name="Stoneking T."/>
            <person name="Kalicki J."/>
            <person name="Graves T."/>
            <person name="Harmon G."/>
            <person name="Edwards J."/>
            <person name="Latreille P."/>
            <person name="Courtney L."/>
            <person name="Cloud J."/>
            <person name="Abbott A."/>
            <person name="Scott K."/>
            <person name="Johnson D."/>
            <person name="Minx P."/>
            <person name="Bentley D."/>
            <person name="Fulton B."/>
            <person name="Miller N."/>
            <person name="Greco T."/>
            <person name="Kemp K."/>
            <person name="Kramer J."/>
            <person name="Fulton L."/>
            <person name="Mardis E."/>
            <person name="Dante M."/>
            <person name="Pepin K."/>
            <person name="Hillier L.W."/>
            <person name="Nelson J."/>
            <person name="Spieth J."/>
            <person name="Ryan E."/>
            <person name="Andrews S."/>
            <person name="Geisel C."/>
            <person name="Layman D."/>
            <person name="Du H."/>
            <person name="Ali J."/>
            <person name="Berghoff A."/>
            <person name="Jones K."/>
            <person name="Drone K."/>
            <person name="Cotton M."/>
            <person name="Joshu C."/>
            <person name="Antonoiu B."/>
            <person name="Zidanic M."/>
            <person name="Strong C."/>
            <person name="Sun H."/>
            <person name="Lamar B."/>
            <person name="Yordan C."/>
            <person name="Ma P."/>
            <person name="Zhong J."/>
            <person name="Preston R."/>
            <person name="Vil D."/>
            <person name="Shekher M."/>
            <person name="Matero A."/>
            <person name="Shah R."/>
            <person name="Swaby I.K."/>
            <person name="O'Shaughnessy A."/>
            <person name="Rodriguez M."/>
            <person name="Hoffman J."/>
            <person name="Till S."/>
            <person name="Granat S."/>
            <person name="Shohdy N."/>
            <person name="Hasegawa A."/>
            <person name="Hameed A."/>
            <person name="Lodhi M."/>
            <person name="Johnson A."/>
            <person name="Chen E."/>
            <person name="Marra M.A."/>
            <person name="Martienssen R."/>
            <person name="McCombie W.R."/>
        </authorList>
    </citation>
    <scope>NUCLEOTIDE SEQUENCE [LARGE SCALE GENOMIC DNA]</scope>
    <source>
        <strain>cv. Columbia</strain>
    </source>
</reference>
<reference key="3">
    <citation type="journal article" date="2017" name="Plant J.">
        <title>Araport11: a complete reannotation of the Arabidopsis thaliana reference genome.</title>
        <authorList>
            <person name="Cheng C.Y."/>
            <person name="Krishnakumar V."/>
            <person name="Chan A.P."/>
            <person name="Thibaud-Nissen F."/>
            <person name="Schobel S."/>
            <person name="Town C.D."/>
        </authorList>
    </citation>
    <scope>GENOME REANNOTATION</scope>
    <scope>SEQUENCE REVISION</scope>
    <source>
        <strain>cv. Columbia</strain>
    </source>
</reference>
<reference key="4">
    <citation type="journal article" date="2003" name="Science">
        <title>Empirical analysis of transcriptional activity in the Arabidopsis genome.</title>
        <authorList>
            <person name="Yamada K."/>
            <person name="Lim J."/>
            <person name="Dale J.M."/>
            <person name="Chen H."/>
            <person name="Shinn P."/>
            <person name="Palm C.J."/>
            <person name="Southwick A.M."/>
            <person name="Wu H.C."/>
            <person name="Kim C.J."/>
            <person name="Nguyen M."/>
            <person name="Pham P.K."/>
            <person name="Cheuk R.F."/>
            <person name="Karlin-Newmann G."/>
            <person name="Liu S.X."/>
            <person name="Lam B."/>
            <person name="Sakano H."/>
            <person name="Wu T."/>
            <person name="Yu G."/>
            <person name="Miranda M."/>
            <person name="Quach H.L."/>
            <person name="Tripp M."/>
            <person name="Chang C.H."/>
            <person name="Lee J.M."/>
            <person name="Toriumi M.J."/>
            <person name="Chan M.M."/>
            <person name="Tang C.C."/>
            <person name="Onodera C.S."/>
            <person name="Deng J.M."/>
            <person name="Akiyama K."/>
            <person name="Ansari Y."/>
            <person name="Arakawa T."/>
            <person name="Banh J."/>
            <person name="Banno F."/>
            <person name="Bowser L."/>
            <person name="Brooks S.Y."/>
            <person name="Carninci P."/>
            <person name="Chao Q."/>
            <person name="Choy N."/>
            <person name="Enju A."/>
            <person name="Goldsmith A.D."/>
            <person name="Gurjal M."/>
            <person name="Hansen N.F."/>
            <person name="Hayashizaki Y."/>
            <person name="Johnson-Hopson C."/>
            <person name="Hsuan V.W."/>
            <person name="Iida K."/>
            <person name="Karnes M."/>
            <person name="Khan S."/>
            <person name="Koesema E."/>
            <person name="Ishida J."/>
            <person name="Jiang P.X."/>
            <person name="Jones T."/>
            <person name="Kawai J."/>
            <person name="Kamiya A."/>
            <person name="Meyers C."/>
            <person name="Nakajima M."/>
            <person name="Narusaka M."/>
            <person name="Seki M."/>
            <person name="Sakurai T."/>
            <person name="Satou M."/>
            <person name="Tamse R."/>
            <person name="Vaysberg M."/>
            <person name="Wallender E.K."/>
            <person name="Wong C."/>
            <person name="Yamamura Y."/>
            <person name="Yuan S."/>
            <person name="Shinozaki K."/>
            <person name="Davis R.W."/>
            <person name="Theologis A."/>
            <person name="Ecker J.R."/>
        </authorList>
    </citation>
    <scope>NUCLEOTIDE SEQUENCE [LARGE SCALE MRNA]</scope>
    <source>
        <strain>cv. Columbia</strain>
    </source>
</reference>
<reference key="5">
    <citation type="journal article" date="2005" name="Cell">
        <title>A new class of transcription factors mediates brassinosteroid-regulated gene expression in Arabidopsis.</title>
        <authorList>
            <person name="Yin Y."/>
            <person name="Vafeados D."/>
            <person name="Tao Y."/>
            <person name="Yoshida S."/>
            <person name="Asami T."/>
            <person name="Chory J."/>
        </authorList>
    </citation>
    <scope>IDENTIFICATION</scope>
    <scope>PHOSPHORYLATION</scope>
    <scope>MUTANT BEH2M</scope>
</reference>
<name>BEH2_ARATH</name>
<protein>
    <recommendedName>
        <fullName>BES1/BZR1 homolog protein 2</fullName>
    </recommendedName>
</protein>
<accession>Q94A43</accession>
<accession>F4JQH5</accession>
<accession>Q1K4H6</accession>
<accession>Q7FC21</accession>